<proteinExistence type="inferred from homology"/>
<protein>
    <recommendedName>
        <fullName evidence="1">6,7-dimethyl-8-ribityllumazine synthase</fullName>
        <shortName evidence="1">DMRL synthase</shortName>
        <shortName evidence="1">LS</shortName>
        <shortName evidence="1">Lumazine synthase</shortName>
        <ecNumber evidence="1">2.5.1.78</ecNumber>
    </recommendedName>
</protein>
<gene>
    <name evidence="1" type="primary">ribH</name>
    <name type="ordered locus">KPN78578_03580</name>
    <name type="ORF">KPN_00367</name>
</gene>
<comment type="function">
    <text evidence="1">Catalyzes the formation of 6,7-dimethyl-8-ribityllumazine by condensation of 5-amino-6-(D-ribitylamino)uracil with 3,4-dihydroxy-2-butanone 4-phosphate. This is the penultimate step in the biosynthesis of riboflavin.</text>
</comment>
<comment type="catalytic activity">
    <reaction evidence="1">
        <text>(2S)-2-hydroxy-3-oxobutyl phosphate + 5-amino-6-(D-ribitylamino)uracil = 6,7-dimethyl-8-(1-D-ribityl)lumazine + phosphate + 2 H2O + H(+)</text>
        <dbReference type="Rhea" id="RHEA:26152"/>
        <dbReference type="ChEBI" id="CHEBI:15377"/>
        <dbReference type="ChEBI" id="CHEBI:15378"/>
        <dbReference type="ChEBI" id="CHEBI:15934"/>
        <dbReference type="ChEBI" id="CHEBI:43474"/>
        <dbReference type="ChEBI" id="CHEBI:58201"/>
        <dbReference type="ChEBI" id="CHEBI:58830"/>
        <dbReference type="EC" id="2.5.1.78"/>
    </reaction>
</comment>
<comment type="pathway">
    <text evidence="1">Cofactor biosynthesis; riboflavin biosynthesis; riboflavin from 2-hydroxy-3-oxobutyl phosphate and 5-amino-6-(D-ribitylamino)uracil: step 1/2.</text>
</comment>
<comment type="subunit">
    <text evidence="1">Forms an icosahedral capsid composed of 60 subunits, arranged as a dodecamer of pentamers.</text>
</comment>
<comment type="similarity">
    <text evidence="1">Belongs to the DMRL synthase family.</text>
</comment>
<sequence>MNIIEANVATPDARVAITIARFNNFINDSLLEGAIDALKRIGQVKDENITVVWVPGAYELPLAAGALAKTGKYDAVIALGTVIRGGTAHFEYVAGGASNGLAHVAQDSEIPVAFGVLTTESIEQAIERAGTKAGNKGAEAALTALEMINVLKAIKA</sequence>
<dbReference type="EC" id="2.5.1.78" evidence="1"/>
<dbReference type="EMBL" id="CP000647">
    <property type="protein sequence ID" value="ABR75819.1"/>
    <property type="molecule type" value="Genomic_DNA"/>
</dbReference>
<dbReference type="SMR" id="A6T5E8"/>
<dbReference type="STRING" id="272620.KPN_00367"/>
<dbReference type="jPOST" id="A6T5E8"/>
<dbReference type="PaxDb" id="272620-KPN_00367"/>
<dbReference type="EnsemblBacteria" id="ABR75819">
    <property type="protein sequence ID" value="ABR75819"/>
    <property type="gene ID" value="KPN_00367"/>
</dbReference>
<dbReference type="KEGG" id="kpn:KPN_00367"/>
<dbReference type="HOGENOM" id="CLU_089358_1_1_6"/>
<dbReference type="UniPathway" id="UPA00275">
    <property type="reaction ID" value="UER00404"/>
</dbReference>
<dbReference type="Proteomes" id="UP000000265">
    <property type="component" value="Chromosome"/>
</dbReference>
<dbReference type="GO" id="GO:0005829">
    <property type="term" value="C:cytosol"/>
    <property type="evidence" value="ECO:0007669"/>
    <property type="project" value="TreeGrafter"/>
</dbReference>
<dbReference type="GO" id="GO:0009349">
    <property type="term" value="C:riboflavin synthase complex"/>
    <property type="evidence" value="ECO:0007669"/>
    <property type="project" value="InterPro"/>
</dbReference>
<dbReference type="GO" id="GO:0000906">
    <property type="term" value="F:6,7-dimethyl-8-ribityllumazine synthase activity"/>
    <property type="evidence" value="ECO:0007669"/>
    <property type="project" value="UniProtKB-UniRule"/>
</dbReference>
<dbReference type="GO" id="GO:0009231">
    <property type="term" value="P:riboflavin biosynthetic process"/>
    <property type="evidence" value="ECO:0007669"/>
    <property type="project" value="UniProtKB-UniRule"/>
</dbReference>
<dbReference type="CDD" id="cd09209">
    <property type="entry name" value="Lumazine_synthase-I"/>
    <property type="match status" value="1"/>
</dbReference>
<dbReference type="FunFam" id="3.40.50.960:FF:000001">
    <property type="entry name" value="6,7-dimethyl-8-ribityllumazine synthase"/>
    <property type="match status" value="1"/>
</dbReference>
<dbReference type="Gene3D" id="3.40.50.960">
    <property type="entry name" value="Lumazine/riboflavin synthase"/>
    <property type="match status" value="1"/>
</dbReference>
<dbReference type="HAMAP" id="MF_00178">
    <property type="entry name" value="Lumazine_synth"/>
    <property type="match status" value="1"/>
</dbReference>
<dbReference type="InterPro" id="IPR034964">
    <property type="entry name" value="LS"/>
</dbReference>
<dbReference type="InterPro" id="IPR002180">
    <property type="entry name" value="LS/RS"/>
</dbReference>
<dbReference type="InterPro" id="IPR036467">
    <property type="entry name" value="LS/RS_sf"/>
</dbReference>
<dbReference type="NCBIfam" id="TIGR00114">
    <property type="entry name" value="lumazine-synth"/>
    <property type="match status" value="1"/>
</dbReference>
<dbReference type="NCBIfam" id="NF000812">
    <property type="entry name" value="PRK00061.1-4"/>
    <property type="match status" value="1"/>
</dbReference>
<dbReference type="PANTHER" id="PTHR21058:SF0">
    <property type="entry name" value="6,7-DIMETHYL-8-RIBITYLLUMAZINE SYNTHASE"/>
    <property type="match status" value="1"/>
</dbReference>
<dbReference type="PANTHER" id="PTHR21058">
    <property type="entry name" value="6,7-DIMETHYL-8-RIBITYLLUMAZINE SYNTHASE DMRL SYNTHASE LUMAZINE SYNTHASE"/>
    <property type="match status" value="1"/>
</dbReference>
<dbReference type="Pfam" id="PF00885">
    <property type="entry name" value="DMRL_synthase"/>
    <property type="match status" value="1"/>
</dbReference>
<dbReference type="SUPFAM" id="SSF52121">
    <property type="entry name" value="Lumazine synthase"/>
    <property type="match status" value="1"/>
</dbReference>
<feature type="chain" id="PRO_1000040436" description="6,7-dimethyl-8-ribityllumazine synthase">
    <location>
        <begin position="1"/>
        <end position="156"/>
    </location>
</feature>
<feature type="active site" description="Proton donor" evidence="1">
    <location>
        <position position="89"/>
    </location>
</feature>
<feature type="binding site" evidence="1">
    <location>
        <position position="22"/>
    </location>
    <ligand>
        <name>5-amino-6-(D-ribitylamino)uracil</name>
        <dbReference type="ChEBI" id="CHEBI:15934"/>
    </ligand>
</feature>
<feature type="binding site" evidence="1">
    <location>
        <begin position="57"/>
        <end position="59"/>
    </location>
    <ligand>
        <name>5-amino-6-(D-ribitylamino)uracil</name>
        <dbReference type="ChEBI" id="CHEBI:15934"/>
    </ligand>
</feature>
<feature type="binding site" evidence="1">
    <location>
        <begin position="81"/>
        <end position="83"/>
    </location>
    <ligand>
        <name>5-amino-6-(D-ribitylamino)uracil</name>
        <dbReference type="ChEBI" id="CHEBI:15934"/>
    </ligand>
</feature>
<feature type="binding site" evidence="1">
    <location>
        <begin position="86"/>
        <end position="87"/>
    </location>
    <ligand>
        <name>(2S)-2-hydroxy-3-oxobutyl phosphate</name>
        <dbReference type="ChEBI" id="CHEBI:58830"/>
    </ligand>
</feature>
<feature type="binding site" evidence="1">
    <location>
        <position position="114"/>
    </location>
    <ligand>
        <name>5-amino-6-(D-ribitylamino)uracil</name>
        <dbReference type="ChEBI" id="CHEBI:15934"/>
    </ligand>
</feature>
<feature type="binding site" evidence="1">
    <location>
        <position position="128"/>
    </location>
    <ligand>
        <name>(2S)-2-hydroxy-3-oxobutyl phosphate</name>
        <dbReference type="ChEBI" id="CHEBI:58830"/>
    </ligand>
</feature>
<evidence type="ECO:0000255" key="1">
    <source>
        <dbReference type="HAMAP-Rule" id="MF_00178"/>
    </source>
</evidence>
<organism>
    <name type="scientific">Klebsiella pneumoniae subsp. pneumoniae (strain ATCC 700721 / MGH 78578)</name>
    <dbReference type="NCBI Taxonomy" id="272620"/>
    <lineage>
        <taxon>Bacteria</taxon>
        <taxon>Pseudomonadati</taxon>
        <taxon>Pseudomonadota</taxon>
        <taxon>Gammaproteobacteria</taxon>
        <taxon>Enterobacterales</taxon>
        <taxon>Enterobacteriaceae</taxon>
        <taxon>Klebsiella/Raoultella group</taxon>
        <taxon>Klebsiella</taxon>
        <taxon>Klebsiella pneumoniae complex</taxon>
    </lineage>
</organism>
<name>RISB_KLEP7</name>
<accession>A6T5E8</accession>
<reference key="1">
    <citation type="submission" date="2006-09" db="EMBL/GenBank/DDBJ databases">
        <authorList>
            <consortium name="The Klebsiella pneumonia Genome Sequencing Project"/>
            <person name="McClelland M."/>
            <person name="Sanderson E.K."/>
            <person name="Spieth J."/>
            <person name="Clifton W.S."/>
            <person name="Latreille P."/>
            <person name="Sabo A."/>
            <person name="Pepin K."/>
            <person name="Bhonagiri V."/>
            <person name="Porwollik S."/>
            <person name="Ali J."/>
            <person name="Wilson R.K."/>
        </authorList>
    </citation>
    <scope>NUCLEOTIDE SEQUENCE [LARGE SCALE GENOMIC DNA]</scope>
    <source>
        <strain>ATCC 700721 / MGH 78578</strain>
    </source>
</reference>
<keyword id="KW-0686">Riboflavin biosynthesis</keyword>
<keyword id="KW-0808">Transferase</keyword>